<keyword id="KW-0030">Aminoacyl-tRNA synthetase</keyword>
<keyword id="KW-0067">ATP-binding</keyword>
<keyword id="KW-0436">Ligase</keyword>
<keyword id="KW-0479">Metal-binding</keyword>
<keyword id="KW-0496">Mitochondrion</keyword>
<keyword id="KW-0547">Nucleotide-binding</keyword>
<keyword id="KW-0648">Protein biosynthesis</keyword>
<keyword id="KW-1185">Reference proteome</keyword>
<keyword id="KW-0694">RNA-binding</keyword>
<keyword id="KW-0809">Transit peptide</keyword>
<keyword id="KW-0820">tRNA-binding</keyword>
<keyword id="KW-0862">Zinc</keyword>
<organism>
    <name type="scientific">Caenorhabditis elegans</name>
    <dbReference type="NCBI Taxonomy" id="6239"/>
    <lineage>
        <taxon>Eukaryota</taxon>
        <taxon>Metazoa</taxon>
        <taxon>Ecdysozoa</taxon>
        <taxon>Nematoda</taxon>
        <taxon>Chromadorea</taxon>
        <taxon>Rhabditida</taxon>
        <taxon>Rhabditina</taxon>
        <taxon>Rhabditomorpha</taxon>
        <taxon>Rhabditoidea</taxon>
        <taxon>Rhabditidae</taxon>
        <taxon>Peloderinae</taxon>
        <taxon>Caenorhabditis</taxon>
    </lineage>
</organism>
<name>SYAM_CAEEL</name>
<accession>Q23122</accession>
<accession>Q9U6B7</accession>
<protein>
    <recommendedName>
        <fullName evidence="2">Alanine--tRNA ligase, mitochondrial</fullName>
        <ecNumber evidence="2">6.1.1.7</ecNumber>
    </recommendedName>
    <alternativeName>
        <fullName>AlaRS B</fullName>
    </alternativeName>
    <alternativeName>
        <fullName evidence="2">Alanyl-tRNA synthetase</fullName>
    </alternativeName>
</protein>
<gene>
    <name evidence="2" type="primary">aars-1</name>
    <name type="synonym">alas</name>
    <name type="synonym">ars-1</name>
    <name type="ORF">W02B12.6</name>
</gene>
<evidence type="ECO:0000250" key="1">
    <source>
        <dbReference type="UniProtKB" id="P49588"/>
    </source>
</evidence>
<evidence type="ECO:0000255" key="2">
    <source>
        <dbReference type="HAMAP-Rule" id="MF_03133"/>
    </source>
</evidence>
<evidence type="ECO:0000269" key="3">
    <source>
    </source>
</evidence>
<evidence type="ECO:0000305" key="4"/>
<comment type="function">
    <text evidence="2">Catalyzes the attachment of alanine to tRNA(Ala) in a two-step reaction: alanine is first activated by ATP to form Ala-AMP and then transferred to the acceptor end of tRNA(Ala). Also edits incorrectly charged tRNA(Ala) via its editing domain.</text>
</comment>
<comment type="catalytic activity">
    <reaction evidence="2">
        <text>tRNA(Ala) + L-alanine + ATP = L-alanyl-tRNA(Ala) + AMP + diphosphate</text>
        <dbReference type="Rhea" id="RHEA:12540"/>
        <dbReference type="Rhea" id="RHEA-COMP:9657"/>
        <dbReference type="Rhea" id="RHEA-COMP:9923"/>
        <dbReference type="ChEBI" id="CHEBI:30616"/>
        <dbReference type="ChEBI" id="CHEBI:33019"/>
        <dbReference type="ChEBI" id="CHEBI:57972"/>
        <dbReference type="ChEBI" id="CHEBI:78442"/>
        <dbReference type="ChEBI" id="CHEBI:78497"/>
        <dbReference type="ChEBI" id="CHEBI:456215"/>
        <dbReference type="EC" id="6.1.1.7"/>
    </reaction>
</comment>
<comment type="cofactor">
    <cofactor evidence="2">
        <name>Zn(2+)</name>
        <dbReference type="ChEBI" id="CHEBI:29105"/>
    </cofactor>
    <text evidence="2">Binds 1 zinc ion per subunit.</text>
</comment>
<comment type="subunit">
    <text evidence="2 3">Monomer.</text>
</comment>
<comment type="subcellular location">
    <subcellularLocation>
        <location evidence="4">Mitochondrion</location>
    </subcellularLocation>
</comment>
<comment type="domain">
    <text evidence="2">Consists of three domains; the N-terminal catalytic domain, the editing domain and the C-terminal C-Ala domain. The editing domain removes incorrectly charged amino acids, while the C-Ala domain, along with tRNA(Ala), serves as a bridge to cooperatively bring together the editing and aminoacylation centers thus stimulating deacylation of misacylated tRNAs.</text>
</comment>
<comment type="similarity">
    <text evidence="2">Belongs to the class-II aminoacyl-tRNA synthetase family.</text>
</comment>
<feature type="transit peptide" description="Mitochondrion" evidence="2">
    <location>
        <begin position="1"/>
        <end status="unknown"/>
    </location>
</feature>
<feature type="chain" id="PRO_0000402118" description="Alanine--tRNA ligase, mitochondrial">
    <location>
        <begin status="unknown"/>
        <end position="793"/>
    </location>
</feature>
<feature type="binding site" evidence="1">
    <location>
        <position position="88"/>
    </location>
    <ligand>
        <name>ATP</name>
        <dbReference type="ChEBI" id="CHEBI:30616"/>
    </ligand>
</feature>
<feature type="binding site" evidence="1">
    <location>
        <position position="187"/>
    </location>
    <ligand>
        <name>ATP</name>
        <dbReference type="ChEBI" id="CHEBI:30616"/>
    </ligand>
</feature>
<feature type="binding site" evidence="1">
    <location>
        <begin position="224"/>
        <end position="226"/>
    </location>
    <ligand>
        <name>ATP</name>
        <dbReference type="ChEBI" id="CHEBI:30616"/>
    </ligand>
</feature>
<feature type="binding site" evidence="1">
    <location>
        <position position="226"/>
    </location>
    <ligand>
        <name>L-alanine</name>
        <dbReference type="ChEBI" id="CHEBI:57972"/>
    </ligand>
</feature>
<feature type="binding site" evidence="1">
    <location>
        <position position="249"/>
    </location>
    <ligand>
        <name>L-alanine</name>
        <dbReference type="ChEBI" id="CHEBI:57972"/>
    </ligand>
</feature>
<feature type="binding site" evidence="1">
    <location>
        <position position="253"/>
    </location>
    <ligand>
        <name>ATP</name>
        <dbReference type="ChEBI" id="CHEBI:30616"/>
    </ligand>
</feature>
<feature type="binding site" evidence="2">
    <location>
        <position position="594"/>
    </location>
    <ligand>
        <name>Zn(2+)</name>
        <dbReference type="ChEBI" id="CHEBI:29105"/>
    </ligand>
</feature>
<feature type="binding site" evidence="2">
    <location>
        <position position="598"/>
    </location>
    <ligand>
        <name>Zn(2+)</name>
        <dbReference type="ChEBI" id="CHEBI:29105"/>
    </ligand>
</feature>
<feature type="binding site" evidence="2">
    <location>
        <position position="706"/>
    </location>
    <ligand>
        <name>Zn(2+)</name>
        <dbReference type="ChEBI" id="CHEBI:29105"/>
    </ligand>
</feature>
<feature type="binding site" evidence="2">
    <location>
        <position position="710"/>
    </location>
    <ligand>
        <name>Zn(2+)</name>
        <dbReference type="ChEBI" id="CHEBI:29105"/>
    </ligand>
</feature>
<reference key="1">
    <citation type="journal article" date="1998" name="Biochemistry">
        <title>Strong selective pressure to use G:U to mark an RNA acceptor stem for alanine.</title>
        <authorList>
            <person name="Chihade J.W."/>
            <person name="Hayashibara K."/>
            <person name="Shiba K."/>
            <person name="Schimmel P."/>
        </authorList>
    </citation>
    <scope>NUCLEOTIDE SEQUENCE [MRNA]</scope>
    <scope>SUBUNIT</scope>
    <scope>PROBABLE SUBCELLULAR LOCATION</scope>
    <source>
        <strain>Bristol N2</strain>
    </source>
</reference>
<reference key="2">
    <citation type="journal article" date="1998" name="Science">
        <title>Genome sequence of the nematode C. elegans: a platform for investigating biology.</title>
        <authorList>
            <consortium name="The C. elegans sequencing consortium"/>
        </authorList>
    </citation>
    <scope>NUCLEOTIDE SEQUENCE [LARGE SCALE GENOMIC DNA]</scope>
    <source>
        <strain>Bristol N2</strain>
    </source>
</reference>
<sequence>MGIGSKILENNIQKSISLGFYHSHSELRKSFYEFFKSKNHEILRSSSVIPDENDGTLLFTNAGMNQFKPLILSSTESRRVANIQKCIRAGGKHNDLDDVGKDLHHQTFFEMMGNWSFNDAFSKEEACRYAWEYLVEILGINADRLYVSYFGGIEKLGLPEDRECREIWKRIGVSSNRILPFVAENFWEMGAAGPCGPCTEIHYDRIGGRDASRLVNIDDSVVEIWNIVFMSSVRDSCGQIRHLGKNHIDTGMGFERLLSVVQNKTSNFDTDVFTPILEKTSELAKKQYTGSLDSRQDATFRLVADHIRAATVAISDGAVPDGTGCGFIVRKMMRRAFLQGISKLGIERYAMSELVPVVASTMKEVYPEIHDTSTHIRKIFNDEEAQFWKTVDKAKKMFDSVAAESKSPIISGRKAFNLFETHGLPLAVTVELARNIGREVDETEFERCRLEAQKVSQKASQFKLPISADDFPSHSDKEKYSYVFRNGKYEFPQVKTRILQVYKDQQKAESLEANDRGFLVLEECQFYGEQGGQTSDTGHLLIDGREVFEVENAKKIAGGAVTVLFGRALLPIRRDLRVEQKLDETRREGVMRAHSATHLLNWALQKLGVGSGQKGSSVDCDRFRFDYSTGDEDLSKEQRTELLIKCEMKMREFIQNGGFTEIIETSLEEAKKIENLQSDVKEDRIGGASVRVVALGSGADVPVECCSGTHIHDVRVIDDVAIMSDKSMGQRLRRIIVLTGKEAAACRNYTKSIYEDLRSTDPKERSKTGKNIDWKRVPIADQARISILLKQKK</sequence>
<dbReference type="EC" id="6.1.1.7" evidence="2"/>
<dbReference type="EMBL" id="AF188715">
    <property type="protein sequence ID" value="AAF05590.1"/>
    <property type="molecule type" value="mRNA"/>
</dbReference>
<dbReference type="EMBL" id="Z66521">
    <property type="protein sequence ID" value="CAA91396.2"/>
    <property type="molecule type" value="Genomic_DNA"/>
</dbReference>
<dbReference type="PIR" id="T26086">
    <property type="entry name" value="T26086"/>
</dbReference>
<dbReference type="RefSeq" id="NP_496444.1">
    <property type="nucleotide sequence ID" value="NM_064043.7"/>
</dbReference>
<dbReference type="SMR" id="Q23122"/>
<dbReference type="BioGRID" id="40056">
    <property type="interactions" value="1"/>
</dbReference>
<dbReference type="FunCoup" id="Q23122">
    <property type="interactions" value="233"/>
</dbReference>
<dbReference type="STRING" id="6239.W02B12.6a.1"/>
<dbReference type="PaxDb" id="6239-W02B12.6a"/>
<dbReference type="PeptideAtlas" id="Q23122"/>
<dbReference type="EnsemblMetazoa" id="W02B12.6a.1">
    <property type="protein sequence ID" value="W02B12.6a.1"/>
    <property type="gene ID" value="WBGene00000196"/>
</dbReference>
<dbReference type="GeneID" id="174749"/>
<dbReference type="KEGG" id="cel:CELE_W02B12.6"/>
<dbReference type="UCSC" id="W02B12.6a">
    <property type="organism name" value="c. elegans"/>
</dbReference>
<dbReference type="AGR" id="WB:WBGene00000196"/>
<dbReference type="CTD" id="174749"/>
<dbReference type="WormBase" id="W02B12.6a">
    <property type="protein sequence ID" value="CE28096"/>
    <property type="gene ID" value="WBGene00000196"/>
    <property type="gene designation" value="aars-1"/>
</dbReference>
<dbReference type="eggNOG" id="KOG0188">
    <property type="taxonomic scope" value="Eukaryota"/>
</dbReference>
<dbReference type="HOGENOM" id="CLU_004485_5_1_1"/>
<dbReference type="InParanoid" id="Q23122"/>
<dbReference type="OMA" id="MSDKSMG"/>
<dbReference type="OrthoDB" id="2423964at2759"/>
<dbReference type="PhylomeDB" id="Q23122"/>
<dbReference type="PRO" id="PR:Q23122"/>
<dbReference type="Proteomes" id="UP000001940">
    <property type="component" value="Chromosome II"/>
</dbReference>
<dbReference type="Bgee" id="WBGene00000196">
    <property type="expression patterns" value="Expressed in germ line (C elegans) and 4 other cell types or tissues"/>
</dbReference>
<dbReference type="GO" id="GO:0005739">
    <property type="term" value="C:mitochondrion"/>
    <property type="evidence" value="ECO:0000318"/>
    <property type="project" value="GO_Central"/>
</dbReference>
<dbReference type="GO" id="GO:0004813">
    <property type="term" value="F:alanine-tRNA ligase activity"/>
    <property type="evidence" value="ECO:0000318"/>
    <property type="project" value="GO_Central"/>
</dbReference>
<dbReference type="GO" id="GO:0002161">
    <property type="term" value="F:aminoacyl-tRNA deacylase activity"/>
    <property type="evidence" value="ECO:0000318"/>
    <property type="project" value="GO_Central"/>
</dbReference>
<dbReference type="GO" id="GO:0005524">
    <property type="term" value="F:ATP binding"/>
    <property type="evidence" value="ECO:0007669"/>
    <property type="project" value="UniProtKB-UniRule"/>
</dbReference>
<dbReference type="GO" id="GO:0000049">
    <property type="term" value="F:tRNA binding"/>
    <property type="evidence" value="ECO:0007669"/>
    <property type="project" value="UniProtKB-KW"/>
</dbReference>
<dbReference type="GO" id="GO:0008270">
    <property type="term" value="F:zinc ion binding"/>
    <property type="evidence" value="ECO:0007669"/>
    <property type="project" value="UniProtKB-UniRule"/>
</dbReference>
<dbReference type="GO" id="GO:0006419">
    <property type="term" value="P:alanyl-tRNA aminoacylation"/>
    <property type="evidence" value="ECO:0000318"/>
    <property type="project" value="GO_Central"/>
</dbReference>
<dbReference type="CDD" id="cd00673">
    <property type="entry name" value="AlaRS_core"/>
    <property type="match status" value="1"/>
</dbReference>
<dbReference type="FunFam" id="3.30.930.10:FF:000011">
    <property type="entry name" value="Alanine--tRNA ligase, cytoplasmic"/>
    <property type="match status" value="1"/>
</dbReference>
<dbReference type="FunFam" id="3.30.980.10:FF:000013">
    <property type="entry name" value="alanine--tRNA ligase, mitochondrial"/>
    <property type="match status" value="1"/>
</dbReference>
<dbReference type="Gene3D" id="2.40.30.130">
    <property type="match status" value="1"/>
</dbReference>
<dbReference type="Gene3D" id="3.30.930.10">
    <property type="entry name" value="Bira Bifunctional Protein, Domain 2"/>
    <property type="match status" value="1"/>
</dbReference>
<dbReference type="Gene3D" id="3.30.980.10">
    <property type="entry name" value="Threonyl-trna Synthetase, Chain A, domain 2"/>
    <property type="match status" value="1"/>
</dbReference>
<dbReference type="HAMAP" id="MF_00036_B">
    <property type="entry name" value="Ala_tRNA_synth_B"/>
    <property type="match status" value="1"/>
</dbReference>
<dbReference type="InterPro" id="IPR045864">
    <property type="entry name" value="aa-tRNA-synth_II/BPL/LPL"/>
</dbReference>
<dbReference type="InterPro" id="IPR002318">
    <property type="entry name" value="Ala-tRNA-lgiase_IIc"/>
</dbReference>
<dbReference type="InterPro" id="IPR018162">
    <property type="entry name" value="Ala-tRNA-ligase_IIc_anticod-bd"/>
</dbReference>
<dbReference type="InterPro" id="IPR018165">
    <property type="entry name" value="Ala-tRNA-synth_IIc_core"/>
</dbReference>
<dbReference type="InterPro" id="IPR018164">
    <property type="entry name" value="Ala-tRNA-synth_IIc_N"/>
</dbReference>
<dbReference type="InterPro" id="IPR050058">
    <property type="entry name" value="Ala-tRNA_ligase"/>
</dbReference>
<dbReference type="InterPro" id="IPR023033">
    <property type="entry name" value="Ala_tRNA_ligase_euk/bac"/>
</dbReference>
<dbReference type="InterPro" id="IPR018163">
    <property type="entry name" value="Thr/Ala-tRNA-synth_IIc_edit"/>
</dbReference>
<dbReference type="InterPro" id="IPR009000">
    <property type="entry name" value="Transl_B-barrel_sf"/>
</dbReference>
<dbReference type="InterPro" id="IPR012947">
    <property type="entry name" value="tRNA_SAD"/>
</dbReference>
<dbReference type="NCBIfam" id="TIGR00344">
    <property type="entry name" value="alaS"/>
    <property type="match status" value="1"/>
</dbReference>
<dbReference type="PANTHER" id="PTHR11777:SF10">
    <property type="entry name" value="ALANINE--TRNA LIGASE, MITOCHONDRIAL"/>
    <property type="match status" value="1"/>
</dbReference>
<dbReference type="PANTHER" id="PTHR11777">
    <property type="entry name" value="ALANYL-TRNA SYNTHETASE"/>
    <property type="match status" value="1"/>
</dbReference>
<dbReference type="Pfam" id="PF01411">
    <property type="entry name" value="tRNA-synt_2c"/>
    <property type="match status" value="1"/>
</dbReference>
<dbReference type="Pfam" id="PF07973">
    <property type="entry name" value="tRNA_SAD"/>
    <property type="match status" value="1"/>
</dbReference>
<dbReference type="PRINTS" id="PR00980">
    <property type="entry name" value="TRNASYNTHALA"/>
</dbReference>
<dbReference type="SMART" id="SM00863">
    <property type="entry name" value="tRNA_SAD"/>
    <property type="match status" value="1"/>
</dbReference>
<dbReference type="SUPFAM" id="SSF55681">
    <property type="entry name" value="Class II aaRS and biotin synthetases"/>
    <property type="match status" value="1"/>
</dbReference>
<dbReference type="SUPFAM" id="SSF101353">
    <property type="entry name" value="Putative anticodon-binding domain of alanyl-tRNA synthetase (AlaRS)"/>
    <property type="match status" value="1"/>
</dbReference>
<dbReference type="SUPFAM" id="SSF55186">
    <property type="entry name" value="ThrRS/AlaRS common domain"/>
    <property type="match status" value="1"/>
</dbReference>
<dbReference type="SUPFAM" id="SSF50447">
    <property type="entry name" value="Translation proteins"/>
    <property type="match status" value="1"/>
</dbReference>
<dbReference type="PROSITE" id="PS50860">
    <property type="entry name" value="AA_TRNA_LIGASE_II_ALA"/>
    <property type="match status" value="1"/>
</dbReference>
<proteinExistence type="evidence at protein level"/>